<protein>
    <recommendedName>
        <fullName evidence="1">4-hydroxythreonine-4-phosphate dehydrogenase</fullName>
        <ecNumber evidence="1">1.1.1.262</ecNumber>
    </recommendedName>
    <alternativeName>
        <fullName evidence="1">4-(phosphohydroxy)-L-threonine dehydrogenase</fullName>
    </alternativeName>
</protein>
<proteinExistence type="inferred from homology"/>
<accession>Q88QT5</accession>
<keyword id="KW-0170">Cobalt</keyword>
<keyword id="KW-0963">Cytoplasm</keyword>
<keyword id="KW-0460">Magnesium</keyword>
<keyword id="KW-0479">Metal-binding</keyword>
<keyword id="KW-0520">NAD</keyword>
<keyword id="KW-0521">NADP</keyword>
<keyword id="KW-0560">Oxidoreductase</keyword>
<keyword id="KW-0664">Pyridoxine biosynthesis</keyword>
<keyword id="KW-1185">Reference proteome</keyword>
<keyword id="KW-0862">Zinc</keyword>
<evidence type="ECO:0000255" key="1">
    <source>
        <dbReference type="HAMAP-Rule" id="MF_00536"/>
    </source>
</evidence>
<sequence>MKPLRFAVTPGEPAGIGPDLCLLLAADAQPHPLIAITSRDLLAERATQLGLAVSLLPVAPGQWPDLPAPAGSLYVWDTPLAAPVVPGQLDKANAAFVLETLTRAGQGCLDGHFAGMITAPVHKGVINESGIAFSGHTEFLAELTRTAQVVMMLATRGLRVALVTTHLPLRDVADAITAERVERVTRILHADMRDKFGIANPRILVCGLNPHAGEGGHLGREEIDIIEPTLARLRTEGMDLRGPLPADTLFTPKYLEHCDAVLAMYHDQGLPVLKYKGFGAAVNVTLGLPIIRTSVDHGTALDLAGTGKVDTGSLRVALETAYQMAENRP</sequence>
<gene>
    <name evidence="1" type="primary">pdxA</name>
    <name type="ordered locus">PP_0402</name>
</gene>
<comment type="function">
    <text evidence="1">Catalyzes the NAD(P)-dependent oxidation of 4-(phosphooxy)-L-threonine (HTP) into 2-amino-3-oxo-4-(phosphooxy)butyric acid which spontaneously decarboxylates to form 3-amino-2-oxopropyl phosphate (AHAP).</text>
</comment>
<comment type="catalytic activity">
    <reaction evidence="1">
        <text>4-(phosphooxy)-L-threonine + NAD(+) = 3-amino-2-oxopropyl phosphate + CO2 + NADH</text>
        <dbReference type="Rhea" id="RHEA:32275"/>
        <dbReference type="ChEBI" id="CHEBI:16526"/>
        <dbReference type="ChEBI" id="CHEBI:57279"/>
        <dbReference type="ChEBI" id="CHEBI:57540"/>
        <dbReference type="ChEBI" id="CHEBI:57945"/>
        <dbReference type="ChEBI" id="CHEBI:58452"/>
        <dbReference type="EC" id="1.1.1.262"/>
    </reaction>
</comment>
<comment type="cofactor">
    <cofactor evidence="1">
        <name>Zn(2+)</name>
        <dbReference type="ChEBI" id="CHEBI:29105"/>
    </cofactor>
    <cofactor evidence="1">
        <name>Mg(2+)</name>
        <dbReference type="ChEBI" id="CHEBI:18420"/>
    </cofactor>
    <cofactor evidence="1">
        <name>Co(2+)</name>
        <dbReference type="ChEBI" id="CHEBI:48828"/>
    </cofactor>
    <text evidence="1">Binds 1 divalent metal cation per subunit. Can use ions such as Zn(2+), Mg(2+) or Co(2+).</text>
</comment>
<comment type="pathway">
    <text evidence="1">Cofactor biosynthesis; pyridoxine 5'-phosphate biosynthesis; pyridoxine 5'-phosphate from D-erythrose 4-phosphate: step 4/5.</text>
</comment>
<comment type="subunit">
    <text evidence="1">Homodimer.</text>
</comment>
<comment type="subcellular location">
    <subcellularLocation>
        <location evidence="1">Cytoplasm</location>
    </subcellularLocation>
</comment>
<comment type="miscellaneous">
    <text evidence="1">The active site is located at the dimer interface.</text>
</comment>
<comment type="similarity">
    <text evidence="1">Belongs to the PdxA family.</text>
</comment>
<feature type="chain" id="PRO_0000188817" description="4-hydroxythreonine-4-phosphate dehydrogenase">
    <location>
        <begin position="1"/>
        <end position="329"/>
    </location>
</feature>
<feature type="binding site" evidence="1">
    <location>
        <position position="136"/>
    </location>
    <ligand>
        <name>substrate</name>
    </ligand>
</feature>
<feature type="binding site" evidence="1">
    <location>
        <position position="137"/>
    </location>
    <ligand>
        <name>substrate</name>
    </ligand>
</feature>
<feature type="binding site" evidence="1">
    <location>
        <position position="166"/>
    </location>
    <ligand>
        <name>a divalent metal cation</name>
        <dbReference type="ChEBI" id="CHEBI:60240"/>
        <note>ligand shared between dimeric partners</note>
    </ligand>
</feature>
<feature type="binding site" evidence="1">
    <location>
        <position position="211"/>
    </location>
    <ligand>
        <name>a divalent metal cation</name>
        <dbReference type="ChEBI" id="CHEBI:60240"/>
        <note>ligand shared between dimeric partners</note>
    </ligand>
</feature>
<feature type="binding site" evidence="1">
    <location>
        <position position="266"/>
    </location>
    <ligand>
        <name>a divalent metal cation</name>
        <dbReference type="ChEBI" id="CHEBI:60240"/>
        <note>ligand shared between dimeric partners</note>
    </ligand>
</feature>
<feature type="binding site" evidence="1">
    <location>
        <position position="274"/>
    </location>
    <ligand>
        <name>substrate</name>
    </ligand>
</feature>
<feature type="binding site" evidence="1">
    <location>
        <position position="283"/>
    </location>
    <ligand>
        <name>substrate</name>
    </ligand>
</feature>
<feature type="binding site" evidence="1">
    <location>
        <position position="292"/>
    </location>
    <ligand>
        <name>substrate</name>
    </ligand>
</feature>
<reference key="1">
    <citation type="journal article" date="2002" name="Environ. Microbiol.">
        <title>Complete genome sequence and comparative analysis of the metabolically versatile Pseudomonas putida KT2440.</title>
        <authorList>
            <person name="Nelson K.E."/>
            <person name="Weinel C."/>
            <person name="Paulsen I.T."/>
            <person name="Dodson R.J."/>
            <person name="Hilbert H."/>
            <person name="Martins dos Santos V.A.P."/>
            <person name="Fouts D.E."/>
            <person name="Gill S.R."/>
            <person name="Pop M."/>
            <person name="Holmes M."/>
            <person name="Brinkac L.M."/>
            <person name="Beanan M.J."/>
            <person name="DeBoy R.T."/>
            <person name="Daugherty S.C."/>
            <person name="Kolonay J.F."/>
            <person name="Madupu R."/>
            <person name="Nelson W.C."/>
            <person name="White O."/>
            <person name="Peterson J.D."/>
            <person name="Khouri H.M."/>
            <person name="Hance I."/>
            <person name="Chris Lee P."/>
            <person name="Holtzapple E.K."/>
            <person name="Scanlan D."/>
            <person name="Tran K."/>
            <person name="Moazzez A."/>
            <person name="Utterback T.R."/>
            <person name="Rizzo M."/>
            <person name="Lee K."/>
            <person name="Kosack D."/>
            <person name="Moestl D."/>
            <person name="Wedler H."/>
            <person name="Lauber J."/>
            <person name="Stjepandic D."/>
            <person name="Hoheisel J."/>
            <person name="Straetz M."/>
            <person name="Heim S."/>
            <person name="Kiewitz C."/>
            <person name="Eisen J.A."/>
            <person name="Timmis K.N."/>
            <person name="Duesterhoeft A."/>
            <person name="Tuemmler B."/>
            <person name="Fraser C.M."/>
        </authorList>
    </citation>
    <scope>NUCLEOTIDE SEQUENCE [LARGE SCALE GENOMIC DNA]</scope>
    <source>
        <strain>ATCC 47054 / DSM 6125 / CFBP 8728 / NCIMB 11950 / KT2440</strain>
    </source>
</reference>
<name>PDXA_PSEPK</name>
<organism>
    <name type="scientific">Pseudomonas putida (strain ATCC 47054 / DSM 6125 / CFBP 8728 / NCIMB 11950 / KT2440)</name>
    <dbReference type="NCBI Taxonomy" id="160488"/>
    <lineage>
        <taxon>Bacteria</taxon>
        <taxon>Pseudomonadati</taxon>
        <taxon>Pseudomonadota</taxon>
        <taxon>Gammaproteobacteria</taxon>
        <taxon>Pseudomonadales</taxon>
        <taxon>Pseudomonadaceae</taxon>
        <taxon>Pseudomonas</taxon>
    </lineage>
</organism>
<dbReference type="EC" id="1.1.1.262" evidence="1"/>
<dbReference type="EMBL" id="AE015451">
    <property type="protein sequence ID" value="AAN66033.1"/>
    <property type="molecule type" value="Genomic_DNA"/>
</dbReference>
<dbReference type="RefSeq" id="NP_742569.1">
    <property type="nucleotide sequence ID" value="NC_002947.4"/>
</dbReference>
<dbReference type="RefSeq" id="WP_003255557.1">
    <property type="nucleotide sequence ID" value="NZ_CP169744.1"/>
</dbReference>
<dbReference type="SMR" id="Q88QT5"/>
<dbReference type="STRING" id="160488.PP_0402"/>
<dbReference type="PaxDb" id="160488-PP_0402"/>
<dbReference type="GeneID" id="83677693"/>
<dbReference type="KEGG" id="ppu:PP_0402"/>
<dbReference type="PATRIC" id="fig|160488.4.peg.432"/>
<dbReference type="eggNOG" id="COG1995">
    <property type="taxonomic scope" value="Bacteria"/>
</dbReference>
<dbReference type="HOGENOM" id="CLU_040168_1_0_6"/>
<dbReference type="OrthoDB" id="9801783at2"/>
<dbReference type="PhylomeDB" id="Q88QT5"/>
<dbReference type="BioCyc" id="PPUT160488:G1G01-439-MONOMER"/>
<dbReference type="UniPathway" id="UPA00244">
    <property type="reaction ID" value="UER00312"/>
</dbReference>
<dbReference type="Proteomes" id="UP000000556">
    <property type="component" value="Chromosome"/>
</dbReference>
<dbReference type="GO" id="GO:0005737">
    <property type="term" value="C:cytoplasm"/>
    <property type="evidence" value="ECO:0007669"/>
    <property type="project" value="UniProtKB-SubCell"/>
</dbReference>
<dbReference type="GO" id="GO:0050570">
    <property type="term" value="F:4-hydroxythreonine-4-phosphate dehydrogenase activity"/>
    <property type="evidence" value="ECO:0007669"/>
    <property type="project" value="UniProtKB-UniRule"/>
</dbReference>
<dbReference type="GO" id="GO:0050897">
    <property type="term" value="F:cobalt ion binding"/>
    <property type="evidence" value="ECO:0007669"/>
    <property type="project" value="UniProtKB-UniRule"/>
</dbReference>
<dbReference type="GO" id="GO:0000287">
    <property type="term" value="F:magnesium ion binding"/>
    <property type="evidence" value="ECO:0007669"/>
    <property type="project" value="UniProtKB-UniRule"/>
</dbReference>
<dbReference type="GO" id="GO:0051287">
    <property type="term" value="F:NAD binding"/>
    <property type="evidence" value="ECO:0007669"/>
    <property type="project" value="InterPro"/>
</dbReference>
<dbReference type="GO" id="GO:0008270">
    <property type="term" value="F:zinc ion binding"/>
    <property type="evidence" value="ECO:0007669"/>
    <property type="project" value="UniProtKB-UniRule"/>
</dbReference>
<dbReference type="GO" id="GO:0042823">
    <property type="term" value="P:pyridoxal phosphate biosynthetic process"/>
    <property type="evidence" value="ECO:0007669"/>
    <property type="project" value="UniProtKB-UniRule"/>
</dbReference>
<dbReference type="GO" id="GO:0008615">
    <property type="term" value="P:pyridoxine biosynthetic process"/>
    <property type="evidence" value="ECO:0007669"/>
    <property type="project" value="UniProtKB-UniRule"/>
</dbReference>
<dbReference type="Gene3D" id="3.40.718.10">
    <property type="entry name" value="Isopropylmalate Dehydrogenase"/>
    <property type="match status" value="1"/>
</dbReference>
<dbReference type="HAMAP" id="MF_00536">
    <property type="entry name" value="PdxA"/>
    <property type="match status" value="1"/>
</dbReference>
<dbReference type="InterPro" id="IPR037510">
    <property type="entry name" value="PdxA"/>
</dbReference>
<dbReference type="InterPro" id="IPR005255">
    <property type="entry name" value="PdxA_fam"/>
</dbReference>
<dbReference type="NCBIfam" id="TIGR00557">
    <property type="entry name" value="pdxA"/>
    <property type="match status" value="1"/>
</dbReference>
<dbReference type="PANTHER" id="PTHR30004">
    <property type="entry name" value="4-HYDROXYTHREONINE-4-PHOSPHATE DEHYDROGENASE"/>
    <property type="match status" value="1"/>
</dbReference>
<dbReference type="PANTHER" id="PTHR30004:SF5">
    <property type="entry name" value="4-HYDROXYTHREONINE-4-PHOSPHATE DEHYDROGENASE"/>
    <property type="match status" value="1"/>
</dbReference>
<dbReference type="Pfam" id="PF04166">
    <property type="entry name" value="PdxA"/>
    <property type="match status" value="1"/>
</dbReference>
<dbReference type="SUPFAM" id="SSF53659">
    <property type="entry name" value="Isocitrate/Isopropylmalate dehydrogenase-like"/>
    <property type="match status" value="1"/>
</dbReference>